<accession>Q0I7U2</accession>
<evidence type="ECO:0000255" key="1">
    <source>
        <dbReference type="HAMAP-Rule" id="MF_00580"/>
    </source>
</evidence>
<sequence length="103" mass="10747">MAAVSLSVSTVKPLGDRVFVKISESEEKTAGGILLPDTAKEKPQVGEVVQVGPGKSNDDGSRQAPEVGIGDKVLYSKYAGTDIKLGSDEYVLLSEKDILAVVG</sequence>
<protein>
    <recommendedName>
        <fullName evidence="1">Co-chaperonin GroES</fullName>
    </recommendedName>
    <alternativeName>
        <fullName evidence="1">10 kDa chaperonin</fullName>
    </alternativeName>
    <alternativeName>
        <fullName evidence="1">Chaperonin-10</fullName>
        <shortName evidence="1">Cpn10</shortName>
    </alternativeName>
</protein>
<name>CH10_SYNS3</name>
<keyword id="KW-0143">Chaperone</keyword>
<keyword id="KW-0963">Cytoplasm</keyword>
<keyword id="KW-1185">Reference proteome</keyword>
<gene>
    <name evidence="1" type="primary">groES</name>
    <name evidence="1" type="synonym">groS</name>
    <name type="ordered locus">sync_2283</name>
</gene>
<dbReference type="EMBL" id="CP000435">
    <property type="protein sequence ID" value="ABI46142.1"/>
    <property type="molecule type" value="Genomic_DNA"/>
</dbReference>
<dbReference type="RefSeq" id="WP_011620192.1">
    <property type="nucleotide sequence ID" value="NC_008319.1"/>
</dbReference>
<dbReference type="SMR" id="Q0I7U2"/>
<dbReference type="STRING" id="64471.sync_2283"/>
<dbReference type="KEGG" id="syg:sync_2283"/>
<dbReference type="eggNOG" id="COG0234">
    <property type="taxonomic scope" value="Bacteria"/>
</dbReference>
<dbReference type="HOGENOM" id="CLU_132825_2_1_3"/>
<dbReference type="OrthoDB" id="9806791at2"/>
<dbReference type="Proteomes" id="UP000001961">
    <property type="component" value="Chromosome"/>
</dbReference>
<dbReference type="GO" id="GO:0005737">
    <property type="term" value="C:cytoplasm"/>
    <property type="evidence" value="ECO:0007669"/>
    <property type="project" value="UniProtKB-SubCell"/>
</dbReference>
<dbReference type="GO" id="GO:0005524">
    <property type="term" value="F:ATP binding"/>
    <property type="evidence" value="ECO:0007669"/>
    <property type="project" value="InterPro"/>
</dbReference>
<dbReference type="GO" id="GO:0046872">
    <property type="term" value="F:metal ion binding"/>
    <property type="evidence" value="ECO:0007669"/>
    <property type="project" value="TreeGrafter"/>
</dbReference>
<dbReference type="GO" id="GO:0044183">
    <property type="term" value="F:protein folding chaperone"/>
    <property type="evidence" value="ECO:0007669"/>
    <property type="project" value="InterPro"/>
</dbReference>
<dbReference type="GO" id="GO:0051087">
    <property type="term" value="F:protein-folding chaperone binding"/>
    <property type="evidence" value="ECO:0007669"/>
    <property type="project" value="TreeGrafter"/>
</dbReference>
<dbReference type="GO" id="GO:0051082">
    <property type="term" value="F:unfolded protein binding"/>
    <property type="evidence" value="ECO:0007669"/>
    <property type="project" value="TreeGrafter"/>
</dbReference>
<dbReference type="GO" id="GO:0051085">
    <property type="term" value="P:chaperone cofactor-dependent protein refolding"/>
    <property type="evidence" value="ECO:0007669"/>
    <property type="project" value="TreeGrafter"/>
</dbReference>
<dbReference type="CDD" id="cd00320">
    <property type="entry name" value="cpn10"/>
    <property type="match status" value="1"/>
</dbReference>
<dbReference type="FunFam" id="2.30.33.40:FF:000001">
    <property type="entry name" value="10 kDa chaperonin"/>
    <property type="match status" value="1"/>
</dbReference>
<dbReference type="Gene3D" id="2.30.33.40">
    <property type="entry name" value="GroES chaperonin"/>
    <property type="match status" value="1"/>
</dbReference>
<dbReference type="HAMAP" id="MF_00580">
    <property type="entry name" value="CH10"/>
    <property type="match status" value="1"/>
</dbReference>
<dbReference type="InterPro" id="IPR020818">
    <property type="entry name" value="Chaperonin_GroES"/>
</dbReference>
<dbReference type="InterPro" id="IPR037124">
    <property type="entry name" value="Chaperonin_GroES_sf"/>
</dbReference>
<dbReference type="InterPro" id="IPR018369">
    <property type="entry name" value="Chaprnonin_Cpn10_CS"/>
</dbReference>
<dbReference type="InterPro" id="IPR011032">
    <property type="entry name" value="GroES-like_sf"/>
</dbReference>
<dbReference type="NCBIfam" id="NF001530">
    <property type="entry name" value="PRK00364.1-6"/>
    <property type="match status" value="1"/>
</dbReference>
<dbReference type="NCBIfam" id="NF001531">
    <property type="entry name" value="PRK00364.2-2"/>
    <property type="match status" value="1"/>
</dbReference>
<dbReference type="NCBIfam" id="NF001533">
    <property type="entry name" value="PRK00364.2-4"/>
    <property type="match status" value="1"/>
</dbReference>
<dbReference type="NCBIfam" id="NF001534">
    <property type="entry name" value="PRK00364.2-5"/>
    <property type="match status" value="1"/>
</dbReference>
<dbReference type="PANTHER" id="PTHR10772">
    <property type="entry name" value="10 KDA HEAT SHOCK PROTEIN"/>
    <property type="match status" value="1"/>
</dbReference>
<dbReference type="PANTHER" id="PTHR10772:SF58">
    <property type="entry name" value="CO-CHAPERONIN GROES"/>
    <property type="match status" value="1"/>
</dbReference>
<dbReference type="Pfam" id="PF00166">
    <property type="entry name" value="Cpn10"/>
    <property type="match status" value="1"/>
</dbReference>
<dbReference type="PRINTS" id="PR00297">
    <property type="entry name" value="CHAPERONIN10"/>
</dbReference>
<dbReference type="SMART" id="SM00883">
    <property type="entry name" value="Cpn10"/>
    <property type="match status" value="1"/>
</dbReference>
<dbReference type="SUPFAM" id="SSF50129">
    <property type="entry name" value="GroES-like"/>
    <property type="match status" value="1"/>
</dbReference>
<dbReference type="PROSITE" id="PS00681">
    <property type="entry name" value="CHAPERONINS_CPN10"/>
    <property type="match status" value="1"/>
</dbReference>
<proteinExistence type="inferred from homology"/>
<organism>
    <name type="scientific">Synechococcus sp. (strain CC9311)</name>
    <dbReference type="NCBI Taxonomy" id="64471"/>
    <lineage>
        <taxon>Bacteria</taxon>
        <taxon>Bacillati</taxon>
        <taxon>Cyanobacteriota</taxon>
        <taxon>Cyanophyceae</taxon>
        <taxon>Synechococcales</taxon>
        <taxon>Synechococcaceae</taxon>
        <taxon>Synechococcus</taxon>
    </lineage>
</organism>
<feature type="chain" id="PRO_1000025388" description="Co-chaperonin GroES">
    <location>
        <begin position="1"/>
        <end position="103"/>
    </location>
</feature>
<reference key="1">
    <citation type="journal article" date="2006" name="Proc. Natl. Acad. Sci. U.S.A.">
        <title>Genome sequence of Synechococcus CC9311: insights into adaptation to a coastal environment.</title>
        <authorList>
            <person name="Palenik B."/>
            <person name="Ren Q."/>
            <person name="Dupont C.L."/>
            <person name="Myers G.S."/>
            <person name="Heidelberg J.F."/>
            <person name="Badger J.H."/>
            <person name="Madupu R."/>
            <person name="Nelson W.C."/>
            <person name="Brinkac L.M."/>
            <person name="Dodson R.J."/>
            <person name="Durkin A.S."/>
            <person name="Daugherty S.C."/>
            <person name="Sullivan S.A."/>
            <person name="Khouri H."/>
            <person name="Mohamoud Y."/>
            <person name="Halpin R."/>
            <person name="Paulsen I.T."/>
        </authorList>
    </citation>
    <scope>NUCLEOTIDE SEQUENCE [LARGE SCALE GENOMIC DNA]</scope>
    <source>
        <strain>CC9311</strain>
    </source>
</reference>
<comment type="function">
    <text evidence="1">Together with the chaperonin GroEL, plays an essential role in assisting protein folding. The GroEL-GroES system forms a nano-cage that allows encapsulation of the non-native substrate proteins and provides a physical environment optimized to promote and accelerate protein folding. GroES binds to the apical surface of the GroEL ring, thereby capping the opening of the GroEL channel.</text>
</comment>
<comment type="subunit">
    <text evidence="1">Heptamer of 7 subunits arranged in a ring. Interacts with the chaperonin GroEL.</text>
</comment>
<comment type="subcellular location">
    <subcellularLocation>
        <location evidence="1">Cytoplasm</location>
    </subcellularLocation>
</comment>
<comment type="similarity">
    <text evidence="1">Belongs to the GroES chaperonin family.</text>
</comment>